<organism>
    <name type="scientific">Nandina domestica</name>
    <name type="common">Heavenly bamboo</name>
    <dbReference type="NCBI Taxonomy" id="41776"/>
    <lineage>
        <taxon>Eukaryota</taxon>
        <taxon>Viridiplantae</taxon>
        <taxon>Streptophyta</taxon>
        <taxon>Embryophyta</taxon>
        <taxon>Tracheophyta</taxon>
        <taxon>Spermatophyta</taxon>
        <taxon>Magnoliopsida</taxon>
        <taxon>Ranunculales</taxon>
        <taxon>Berberidaceae</taxon>
        <taxon>Nandinoideae</taxon>
        <taxon>Nandineae</taxon>
        <taxon>Nandina</taxon>
    </lineage>
</organism>
<reference key="1">
    <citation type="journal article" date="2006" name="BMC Plant Biol.">
        <title>Rapid and accurate pyrosequencing of angiosperm plastid genomes.</title>
        <authorList>
            <person name="Moore M.J."/>
            <person name="Dhingra A."/>
            <person name="Soltis P.S."/>
            <person name="Shaw R."/>
            <person name="Farmerie W.G."/>
            <person name="Folta K.M."/>
            <person name="Soltis D.E."/>
        </authorList>
    </citation>
    <scope>NUCLEOTIDE SEQUENCE [LARGE SCALE GENOMIC DNA]</scope>
</reference>
<geneLocation type="chloroplast"/>
<gene>
    <name evidence="1" type="primary">psbC</name>
</gene>
<keyword id="KW-0007">Acetylation</keyword>
<keyword id="KW-0148">Chlorophyll</keyword>
<keyword id="KW-0150">Chloroplast</keyword>
<keyword id="KW-0157">Chromophore</keyword>
<keyword id="KW-0464">Manganese</keyword>
<keyword id="KW-0472">Membrane</keyword>
<keyword id="KW-0479">Metal-binding</keyword>
<keyword id="KW-0597">Phosphoprotein</keyword>
<keyword id="KW-0602">Photosynthesis</keyword>
<keyword id="KW-0604">Photosystem II</keyword>
<keyword id="KW-0934">Plastid</keyword>
<keyword id="KW-0793">Thylakoid</keyword>
<keyword id="KW-0812">Transmembrane</keyword>
<keyword id="KW-1133">Transmembrane helix</keyword>
<sequence>METLFNGTLALAGRDQETTGFAWWAGNARLINLSGKLLGAHVAHAGLIVFWAGAMNLFEVAHFVPEKPMYEQGLILLPHLATLGWGVGPGGEVIDTFPYFVSGVLHLISSAVLGFGGIYHSLLGPETLEESFPFFGYVWKDRNKMTTILGIHLILLGIGAFLLVLKALYFGGVYDTWAPGGGDVRKITNLTLSPSVIFGYLLKSPFGGEGWIVSVDDLEDIIGGHVWLGSICIFGGIWHILTKPFAWARRALVWSGEAYLSYSLAALSIFGFTACCFVWFNNTAYPSEFYGPTGPEASQAQAFTFLVRDQRLGANVGSAQGPTGLGKYLMRSPTGEVIFGGETMRFWDLRAPWLEPLRGPNGLDLSRLKKDIQPWQERRSAEYMTHAPLGSLNSVGGVATEINAVNYVSPRSWLATSHFVLGFFLFVGHLWHAGRARAAAAGFEKGIDRDLEPVLFMTPLN</sequence>
<dbReference type="EMBL" id="DQ923117">
    <property type="protein sequence ID" value="ABI49859.1"/>
    <property type="molecule type" value="Genomic_DNA"/>
</dbReference>
<dbReference type="RefSeq" id="YP_740646.1">
    <property type="nucleotide sequence ID" value="NC_008336.1"/>
</dbReference>
<dbReference type="SMR" id="Q09FW5"/>
<dbReference type="GeneID" id="4271584"/>
<dbReference type="GO" id="GO:0009535">
    <property type="term" value="C:chloroplast thylakoid membrane"/>
    <property type="evidence" value="ECO:0007669"/>
    <property type="project" value="UniProtKB-SubCell"/>
</dbReference>
<dbReference type="GO" id="GO:0009523">
    <property type="term" value="C:photosystem II"/>
    <property type="evidence" value="ECO:0007669"/>
    <property type="project" value="UniProtKB-KW"/>
</dbReference>
<dbReference type="GO" id="GO:0016168">
    <property type="term" value="F:chlorophyll binding"/>
    <property type="evidence" value="ECO:0007669"/>
    <property type="project" value="UniProtKB-UniRule"/>
</dbReference>
<dbReference type="GO" id="GO:0045156">
    <property type="term" value="F:electron transporter, transferring electrons within the cyclic electron transport pathway of photosynthesis activity"/>
    <property type="evidence" value="ECO:0007669"/>
    <property type="project" value="InterPro"/>
</dbReference>
<dbReference type="GO" id="GO:0046872">
    <property type="term" value="F:metal ion binding"/>
    <property type="evidence" value="ECO:0007669"/>
    <property type="project" value="UniProtKB-KW"/>
</dbReference>
<dbReference type="GO" id="GO:0009772">
    <property type="term" value="P:photosynthetic electron transport in photosystem II"/>
    <property type="evidence" value="ECO:0007669"/>
    <property type="project" value="InterPro"/>
</dbReference>
<dbReference type="FunFam" id="1.10.10.670:FF:000001">
    <property type="entry name" value="Photosystem II CP43 reaction center protein"/>
    <property type="match status" value="1"/>
</dbReference>
<dbReference type="Gene3D" id="1.10.10.670">
    <property type="entry name" value="photosystem ii from thermosynechococcus elongatus"/>
    <property type="match status" value="1"/>
</dbReference>
<dbReference type="HAMAP" id="MF_01496">
    <property type="entry name" value="PSII_PsbC_CP43"/>
    <property type="match status" value="1"/>
</dbReference>
<dbReference type="InterPro" id="IPR000932">
    <property type="entry name" value="PS_antenna-like"/>
</dbReference>
<dbReference type="InterPro" id="IPR036001">
    <property type="entry name" value="PS_II_antenna-like_sf"/>
</dbReference>
<dbReference type="InterPro" id="IPR005869">
    <property type="entry name" value="PSII_PsbC"/>
</dbReference>
<dbReference type="InterPro" id="IPR044900">
    <property type="entry name" value="PSII_PsbC_sf"/>
</dbReference>
<dbReference type="NCBIfam" id="TIGR01153">
    <property type="entry name" value="psbC"/>
    <property type="match status" value="1"/>
</dbReference>
<dbReference type="Pfam" id="PF00421">
    <property type="entry name" value="PSII"/>
    <property type="match status" value="1"/>
</dbReference>
<dbReference type="SUPFAM" id="SSF161077">
    <property type="entry name" value="Photosystem II antenna protein-like"/>
    <property type="match status" value="1"/>
</dbReference>
<proteinExistence type="inferred from homology"/>
<comment type="function">
    <text evidence="1">One of the components of the core complex of photosystem II (PSII). It binds chlorophyll and helps catalyze the primary light-induced photochemical processes of PSII. PSII is a light-driven water:plastoquinone oxidoreductase, using light energy to abstract electrons from H(2)O, generating O(2) and a proton gradient subsequently used for ATP formation.</text>
</comment>
<comment type="cofactor">
    <text evidence="1">Binds multiple chlorophylls and provides some of the ligands for the Ca-4Mn-5O cluster of the oxygen-evolving complex. It may also provide a ligand for a Cl- that is required for oxygen evolution. PSII binds additional chlorophylls, carotenoids and specific lipids.</text>
</comment>
<comment type="subunit">
    <text evidence="1">PSII is composed of 1 copy each of membrane proteins PsbA, PsbB, PsbC, PsbD, PsbE, PsbF, PsbH, PsbI, PsbJ, PsbK, PsbL, PsbM, PsbT, PsbX, PsbY, PsbZ, Psb30/Ycf12, at least 3 peripheral proteins of the oxygen-evolving complex and a large number of cofactors. It forms dimeric complexes.</text>
</comment>
<comment type="subcellular location">
    <subcellularLocation>
        <location evidence="1">Plastid</location>
        <location evidence="1">Chloroplast thylakoid membrane</location>
        <topology evidence="1">Multi-pass membrane protein</topology>
    </subcellularLocation>
</comment>
<comment type="similarity">
    <text evidence="1">Belongs to the PsbB/PsbC family. PsbC subfamily.</text>
</comment>
<evidence type="ECO:0000255" key="1">
    <source>
        <dbReference type="HAMAP-Rule" id="MF_01496"/>
    </source>
</evidence>
<name>PSBC_NANDO</name>
<feature type="propeptide" id="PRO_0000431168" evidence="1">
    <location>
        <begin position="1"/>
        <end position="2"/>
    </location>
</feature>
<feature type="chain" id="PRO_0000361425" description="Photosystem II CP43 reaction center protein" evidence="1">
    <location>
        <begin position="3"/>
        <end position="461"/>
    </location>
</feature>
<feature type="transmembrane region" description="Helical" evidence="1">
    <location>
        <begin position="57"/>
        <end position="81"/>
    </location>
</feature>
<feature type="transmembrane region" description="Helical" evidence="1">
    <location>
        <begin position="122"/>
        <end position="143"/>
    </location>
</feature>
<feature type="transmembrane region" description="Helical" evidence="1">
    <location>
        <begin position="166"/>
        <end position="188"/>
    </location>
</feature>
<feature type="transmembrane region" description="Helical" evidence="1">
    <location>
        <begin position="243"/>
        <end position="263"/>
    </location>
</feature>
<feature type="transmembrane region" description="Helical" evidence="1">
    <location>
        <begin position="279"/>
        <end position="300"/>
    </location>
</feature>
<feature type="transmembrane region" description="Helical" evidence="1">
    <location>
        <begin position="435"/>
        <end position="459"/>
    </location>
</feature>
<feature type="binding site" evidence="1">
    <location>
        <position position="355"/>
    </location>
    <ligand>
        <name>[CaMn4O5] cluster</name>
        <dbReference type="ChEBI" id="CHEBI:189552"/>
    </ligand>
</feature>
<feature type="modified residue" description="N-acetylthreonine" evidence="1">
    <location>
        <position position="3"/>
    </location>
</feature>
<feature type="modified residue" description="Phosphothreonine" evidence="1">
    <location>
        <position position="3"/>
    </location>
</feature>
<accession>Q09FW5</accession>
<protein>
    <recommendedName>
        <fullName evidence="1">Photosystem II CP43 reaction center protein</fullName>
    </recommendedName>
    <alternativeName>
        <fullName evidence="1">PSII 43 kDa protein</fullName>
    </alternativeName>
    <alternativeName>
        <fullName evidence="1">Protein CP-43</fullName>
    </alternativeName>
</protein>